<sequence>MNDTIAAVATPLGKGAISIVKISGNNALNILKQLTKKQDFTPRYAYVCDIFSNNILLDKALAIYFKAPYSFTGEDVCEIQCHGSPLLTQNILQACLNLGARLAQAGEFSKKAFLNHKMDLSEIEASIRLILCEDESVLNALARQLKGELKIFIEEARNNLLKLLASSEVLIDYSEEDIPSDFLNEVSLSLEKQIASFKDLLDFSNMQKQKNKGHALSIIGKPNAGKSSLLNAMLLEERALVSDIKGTTRDTIEEVIELQGHKVRLIDTAGIRESVDKIERLGIEKSLKSLENCDIILSVFDLSKPLEKEDFNIIDALNRTKKPCIVVLNKNDLSPKLELEVLKSHLQIPYSMLETNTLNSKACLKDLSQKISAFFPKLDTQNKLLLTSLAQKNALENAITELQNAKNHLETLELFSYHILSAIENLNLLTRPYETSQMLDSMFSEFCLGK</sequence>
<organism>
    <name type="scientific">Helicobacter acinonychis (strain Sheeba)</name>
    <dbReference type="NCBI Taxonomy" id="382638"/>
    <lineage>
        <taxon>Bacteria</taxon>
        <taxon>Pseudomonadati</taxon>
        <taxon>Campylobacterota</taxon>
        <taxon>Epsilonproteobacteria</taxon>
        <taxon>Campylobacterales</taxon>
        <taxon>Helicobacteraceae</taxon>
        <taxon>Helicobacter</taxon>
    </lineage>
</organism>
<protein>
    <recommendedName>
        <fullName evidence="1">tRNA modification GTPase MnmE</fullName>
        <ecNumber evidence="1">3.6.-.-</ecNumber>
    </recommendedName>
</protein>
<evidence type="ECO:0000255" key="1">
    <source>
        <dbReference type="HAMAP-Rule" id="MF_00379"/>
    </source>
</evidence>
<feature type="chain" id="PRO_1000048834" description="tRNA modification GTPase MnmE">
    <location>
        <begin position="1"/>
        <end position="450"/>
    </location>
</feature>
<feature type="domain" description="TrmE-type G">
    <location>
        <begin position="213"/>
        <end position="376"/>
    </location>
</feature>
<feature type="binding site" evidence="1">
    <location>
        <position position="21"/>
    </location>
    <ligand>
        <name>(6S)-5-formyl-5,6,7,8-tetrahydrofolate</name>
        <dbReference type="ChEBI" id="CHEBI:57457"/>
    </ligand>
</feature>
<feature type="binding site" evidence="1">
    <location>
        <position position="78"/>
    </location>
    <ligand>
        <name>(6S)-5-formyl-5,6,7,8-tetrahydrofolate</name>
        <dbReference type="ChEBI" id="CHEBI:57457"/>
    </ligand>
</feature>
<feature type="binding site" evidence="1">
    <location>
        <position position="117"/>
    </location>
    <ligand>
        <name>(6S)-5-formyl-5,6,7,8-tetrahydrofolate</name>
        <dbReference type="ChEBI" id="CHEBI:57457"/>
    </ligand>
</feature>
<feature type="binding site" evidence="1">
    <location>
        <begin position="223"/>
        <end position="228"/>
    </location>
    <ligand>
        <name>GTP</name>
        <dbReference type="ChEBI" id="CHEBI:37565"/>
    </ligand>
</feature>
<feature type="binding site" evidence="1">
    <location>
        <position position="223"/>
    </location>
    <ligand>
        <name>K(+)</name>
        <dbReference type="ChEBI" id="CHEBI:29103"/>
    </ligand>
</feature>
<feature type="binding site" evidence="1">
    <location>
        <position position="227"/>
    </location>
    <ligand>
        <name>Mg(2+)</name>
        <dbReference type="ChEBI" id="CHEBI:18420"/>
    </ligand>
</feature>
<feature type="binding site" evidence="1">
    <location>
        <begin position="242"/>
        <end position="248"/>
    </location>
    <ligand>
        <name>GTP</name>
        <dbReference type="ChEBI" id="CHEBI:37565"/>
    </ligand>
</feature>
<feature type="binding site" evidence="1">
    <location>
        <position position="242"/>
    </location>
    <ligand>
        <name>K(+)</name>
        <dbReference type="ChEBI" id="CHEBI:29103"/>
    </ligand>
</feature>
<feature type="binding site" evidence="1">
    <location>
        <position position="244"/>
    </location>
    <ligand>
        <name>K(+)</name>
        <dbReference type="ChEBI" id="CHEBI:29103"/>
    </ligand>
</feature>
<feature type="binding site" evidence="1">
    <location>
        <position position="247"/>
    </location>
    <ligand>
        <name>K(+)</name>
        <dbReference type="ChEBI" id="CHEBI:29103"/>
    </ligand>
</feature>
<feature type="binding site" evidence="1">
    <location>
        <position position="248"/>
    </location>
    <ligand>
        <name>Mg(2+)</name>
        <dbReference type="ChEBI" id="CHEBI:18420"/>
    </ligand>
</feature>
<feature type="binding site" evidence="1">
    <location>
        <begin position="267"/>
        <end position="270"/>
    </location>
    <ligand>
        <name>GTP</name>
        <dbReference type="ChEBI" id="CHEBI:37565"/>
    </ligand>
</feature>
<feature type="binding site" evidence="1">
    <location>
        <position position="450"/>
    </location>
    <ligand>
        <name>(6S)-5-formyl-5,6,7,8-tetrahydrofolate</name>
        <dbReference type="ChEBI" id="CHEBI:57457"/>
    </ligand>
</feature>
<reference key="1">
    <citation type="journal article" date="2006" name="PLoS Genet.">
        <title>Who ate whom? Adaptive Helicobacter genomic changes that accompanied a host jump from early humans to large felines.</title>
        <authorList>
            <person name="Eppinger M."/>
            <person name="Baar C."/>
            <person name="Linz B."/>
            <person name="Raddatz G."/>
            <person name="Lanz C."/>
            <person name="Keller H."/>
            <person name="Morelli G."/>
            <person name="Gressmann H."/>
            <person name="Achtman M."/>
            <person name="Schuster S.C."/>
        </authorList>
    </citation>
    <scope>NUCLEOTIDE SEQUENCE [LARGE SCALE GENOMIC DNA]</scope>
    <source>
        <strain>Sheeba</strain>
    </source>
</reference>
<accession>Q17ZA7</accession>
<gene>
    <name evidence="1" type="primary">mnmE</name>
    <name evidence="1" type="synonym">trmE</name>
    <name type="ordered locus">Hac_0167</name>
</gene>
<proteinExistence type="inferred from homology"/>
<comment type="function">
    <text evidence="1">Exhibits a very high intrinsic GTPase hydrolysis rate. Involved in the addition of a carboxymethylaminomethyl (cmnm) group at the wobble position (U34) of certain tRNAs, forming tRNA-cmnm(5)s(2)U34.</text>
</comment>
<comment type="cofactor">
    <cofactor evidence="1">
        <name>K(+)</name>
        <dbReference type="ChEBI" id="CHEBI:29103"/>
    </cofactor>
    <text evidence="1">Binds 1 potassium ion per subunit.</text>
</comment>
<comment type="subunit">
    <text evidence="1">Homodimer. Heterotetramer of two MnmE and two MnmG subunits.</text>
</comment>
<comment type="subcellular location">
    <subcellularLocation>
        <location evidence="1">Cytoplasm</location>
    </subcellularLocation>
</comment>
<comment type="similarity">
    <text evidence="1">Belongs to the TRAFAC class TrmE-Era-EngA-EngB-Septin-like GTPase superfamily. TrmE GTPase family.</text>
</comment>
<keyword id="KW-0963">Cytoplasm</keyword>
<keyword id="KW-0342">GTP-binding</keyword>
<keyword id="KW-0378">Hydrolase</keyword>
<keyword id="KW-0460">Magnesium</keyword>
<keyword id="KW-0479">Metal-binding</keyword>
<keyword id="KW-0547">Nucleotide-binding</keyword>
<keyword id="KW-0630">Potassium</keyword>
<keyword id="KW-0819">tRNA processing</keyword>
<name>MNME_HELAH</name>
<dbReference type="EC" id="3.6.-.-" evidence="1"/>
<dbReference type="EMBL" id="AM260522">
    <property type="protein sequence ID" value="CAJ99019.1"/>
    <property type="molecule type" value="Genomic_DNA"/>
</dbReference>
<dbReference type="RefSeq" id="WP_011577135.1">
    <property type="nucleotide sequence ID" value="NC_008229.1"/>
</dbReference>
<dbReference type="SMR" id="Q17ZA7"/>
<dbReference type="STRING" id="382638.Hac_0167"/>
<dbReference type="GeneID" id="31757698"/>
<dbReference type="KEGG" id="hac:Hac_0167"/>
<dbReference type="eggNOG" id="COG0486">
    <property type="taxonomic scope" value="Bacteria"/>
</dbReference>
<dbReference type="HOGENOM" id="CLU_019624_4_1_7"/>
<dbReference type="BioCyc" id="HACI382638:HAC_RS00745-MONOMER"/>
<dbReference type="Proteomes" id="UP000000775">
    <property type="component" value="Chromosome"/>
</dbReference>
<dbReference type="GO" id="GO:0005829">
    <property type="term" value="C:cytosol"/>
    <property type="evidence" value="ECO:0007669"/>
    <property type="project" value="TreeGrafter"/>
</dbReference>
<dbReference type="GO" id="GO:0005525">
    <property type="term" value="F:GTP binding"/>
    <property type="evidence" value="ECO:0007669"/>
    <property type="project" value="UniProtKB-UniRule"/>
</dbReference>
<dbReference type="GO" id="GO:0003924">
    <property type="term" value="F:GTPase activity"/>
    <property type="evidence" value="ECO:0007669"/>
    <property type="project" value="UniProtKB-UniRule"/>
</dbReference>
<dbReference type="GO" id="GO:0046872">
    <property type="term" value="F:metal ion binding"/>
    <property type="evidence" value="ECO:0007669"/>
    <property type="project" value="UniProtKB-KW"/>
</dbReference>
<dbReference type="GO" id="GO:0030488">
    <property type="term" value="P:tRNA methylation"/>
    <property type="evidence" value="ECO:0007669"/>
    <property type="project" value="TreeGrafter"/>
</dbReference>
<dbReference type="GO" id="GO:0002098">
    <property type="term" value="P:tRNA wobble uridine modification"/>
    <property type="evidence" value="ECO:0007669"/>
    <property type="project" value="TreeGrafter"/>
</dbReference>
<dbReference type="CDD" id="cd04164">
    <property type="entry name" value="trmE"/>
    <property type="match status" value="1"/>
</dbReference>
<dbReference type="CDD" id="cd14858">
    <property type="entry name" value="TrmE_N"/>
    <property type="match status" value="1"/>
</dbReference>
<dbReference type="FunFam" id="3.30.1360.120:FF:000003">
    <property type="entry name" value="tRNA modification GTPase MnmE"/>
    <property type="match status" value="1"/>
</dbReference>
<dbReference type="FunFam" id="3.40.50.300:FF:001376">
    <property type="entry name" value="tRNA modification GTPase MnmE"/>
    <property type="match status" value="1"/>
</dbReference>
<dbReference type="Gene3D" id="3.40.50.300">
    <property type="entry name" value="P-loop containing nucleotide triphosphate hydrolases"/>
    <property type="match status" value="1"/>
</dbReference>
<dbReference type="Gene3D" id="3.30.1360.120">
    <property type="entry name" value="Probable tRNA modification gtpase trme, domain 1"/>
    <property type="match status" value="1"/>
</dbReference>
<dbReference type="Gene3D" id="1.20.120.430">
    <property type="entry name" value="tRNA modification GTPase MnmE domain 2"/>
    <property type="match status" value="1"/>
</dbReference>
<dbReference type="HAMAP" id="MF_00379">
    <property type="entry name" value="GTPase_MnmE"/>
    <property type="match status" value="1"/>
</dbReference>
<dbReference type="InterPro" id="IPR031168">
    <property type="entry name" value="G_TrmE"/>
</dbReference>
<dbReference type="InterPro" id="IPR006073">
    <property type="entry name" value="GTP-bd"/>
</dbReference>
<dbReference type="InterPro" id="IPR018948">
    <property type="entry name" value="GTP-bd_TrmE_N"/>
</dbReference>
<dbReference type="InterPro" id="IPR004520">
    <property type="entry name" value="GTPase_MnmE"/>
</dbReference>
<dbReference type="InterPro" id="IPR027368">
    <property type="entry name" value="MnmE_dom2"/>
</dbReference>
<dbReference type="InterPro" id="IPR025867">
    <property type="entry name" value="MnmE_helical"/>
</dbReference>
<dbReference type="InterPro" id="IPR027417">
    <property type="entry name" value="P-loop_NTPase"/>
</dbReference>
<dbReference type="InterPro" id="IPR005225">
    <property type="entry name" value="Small_GTP-bd"/>
</dbReference>
<dbReference type="InterPro" id="IPR027266">
    <property type="entry name" value="TrmE/GcvT_dom1"/>
</dbReference>
<dbReference type="NCBIfam" id="TIGR00450">
    <property type="entry name" value="mnmE_trmE_thdF"/>
    <property type="match status" value="1"/>
</dbReference>
<dbReference type="NCBIfam" id="TIGR00231">
    <property type="entry name" value="small_GTP"/>
    <property type="match status" value="1"/>
</dbReference>
<dbReference type="PANTHER" id="PTHR42714">
    <property type="entry name" value="TRNA MODIFICATION GTPASE GTPBP3"/>
    <property type="match status" value="1"/>
</dbReference>
<dbReference type="PANTHER" id="PTHR42714:SF2">
    <property type="entry name" value="TRNA MODIFICATION GTPASE GTPBP3, MITOCHONDRIAL"/>
    <property type="match status" value="1"/>
</dbReference>
<dbReference type="Pfam" id="PF01926">
    <property type="entry name" value="MMR_HSR1"/>
    <property type="match status" value="1"/>
</dbReference>
<dbReference type="Pfam" id="PF12631">
    <property type="entry name" value="MnmE_helical"/>
    <property type="match status" value="1"/>
</dbReference>
<dbReference type="Pfam" id="PF10396">
    <property type="entry name" value="TrmE_N"/>
    <property type="match status" value="1"/>
</dbReference>
<dbReference type="PRINTS" id="PR00326">
    <property type="entry name" value="GTP1OBG"/>
</dbReference>
<dbReference type="SUPFAM" id="SSF52540">
    <property type="entry name" value="P-loop containing nucleoside triphosphate hydrolases"/>
    <property type="match status" value="1"/>
</dbReference>
<dbReference type="PROSITE" id="PS51709">
    <property type="entry name" value="G_TRME"/>
    <property type="match status" value="1"/>
</dbReference>